<evidence type="ECO:0000255" key="1">
    <source>
        <dbReference type="HAMAP-Rule" id="MF_01114"/>
    </source>
</evidence>
<accession>B1LAG4</accession>
<comment type="function">
    <text evidence="1">Modulates RecA activity.</text>
</comment>
<comment type="subcellular location">
    <subcellularLocation>
        <location evidence="1">Cytoplasm</location>
    </subcellularLocation>
</comment>
<comment type="similarity">
    <text evidence="1">Belongs to the RecX family.</text>
</comment>
<reference key="1">
    <citation type="journal article" date="2011" name="J. Bacteriol.">
        <title>Genome sequence of Thermotoga sp. strain RQ2, a hyperthermophilic bacterium isolated from a geothermally heated region of the seafloor near Ribeira Quente, the Azores.</title>
        <authorList>
            <person name="Swithers K.S."/>
            <person name="DiPippo J.L."/>
            <person name="Bruce D.C."/>
            <person name="Detter C."/>
            <person name="Tapia R."/>
            <person name="Han S."/>
            <person name="Saunders E."/>
            <person name="Goodwin L.A."/>
            <person name="Han J."/>
            <person name="Woyke T."/>
            <person name="Pitluck S."/>
            <person name="Pennacchio L."/>
            <person name="Nolan M."/>
            <person name="Mikhailova N."/>
            <person name="Lykidis A."/>
            <person name="Land M.L."/>
            <person name="Brettin T."/>
            <person name="Stetter K.O."/>
            <person name="Nelson K.E."/>
            <person name="Gogarten J.P."/>
            <person name="Noll K.M."/>
        </authorList>
    </citation>
    <scope>NUCLEOTIDE SEQUENCE [LARGE SCALE GENOMIC DNA]</scope>
    <source>
        <strain>RQ2</strain>
    </source>
</reference>
<name>RECX_THESQ</name>
<sequence length="161" mass="19483">MDYYQWRKKNRGKKRNLQAKKPLNYALRLLKYRVRFEDELRERLKKQGFADEEVESTITTLKKQGYLDDEKAAYLFALDEMRLKLFGPRVVKMKLKSLGVDEEIIERAIEKALEEIDFHEELKRLKGRFKDRWELRDYLYRRGFDSSLIEEILNKIDGGEE</sequence>
<protein>
    <recommendedName>
        <fullName evidence="1">Regulatory protein RecX</fullName>
    </recommendedName>
</protein>
<keyword id="KW-0963">Cytoplasm</keyword>
<proteinExistence type="inferred from homology"/>
<gene>
    <name evidence="1" type="primary">recX</name>
    <name type="ordered locus">TRQ2_0961</name>
</gene>
<feature type="chain" id="PRO_1000137202" description="Regulatory protein RecX">
    <location>
        <begin position="1"/>
        <end position="161"/>
    </location>
</feature>
<organism>
    <name type="scientific">Thermotoga sp. (strain RQ2)</name>
    <dbReference type="NCBI Taxonomy" id="126740"/>
    <lineage>
        <taxon>Bacteria</taxon>
        <taxon>Thermotogati</taxon>
        <taxon>Thermotogota</taxon>
        <taxon>Thermotogae</taxon>
        <taxon>Thermotogales</taxon>
        <taxon>Thermotogaceae</taxon>
        <taxon>Thermotoga</taxon>
    </lineage>
</organism>
<dbReference type="EMBL" id="CP000969">
    <property type="protein sequence ID" value="ACB09312.1"/>
    <property type="molecule type" value="Genomic_DNA"/>
</dbReference>
<dbReference type="RefSeq" id="WP_010865419.1">
    <property type="nucleotide sequence ID" value="NC_010483.1"/>
</dbReference>
<dbReference type="SMR" id="B1LAG4"/>
<dbReference type="KEGG" id="trq:TRQ2_0961"/>
<dbReference type="HOGENOM" id="CLU_066607_5_1_0"/>
<dbReference type="Proteomes" id="UP000001687">
    <property type="component" value="Chromosome"/>
</dbReference>
<dbReference type="GO" id="GO:0005737">
    <property type="term" value="C:cytoplasm"/>
    <property type="evidence" value="ECO:0007669"/>
    <property type="project" value="UniProtKB-SubCell"/>
</dbReference>
<dbReference type="GO" id="GO:0006282">
    <property type="term" value="P:regulation of DNA repair"/>
    <property type="evidence" value="ECO:0007669"/>
    <property type="project" value="UniProtKB-UniRule"/>
</dbReference>
<dbReference type="Gene3D" id="1.10.10.10">
    <property type="entry name" value="Winged helix-like DNA-binding domain superfamily/Winged helix DNA-binding domain"/>
    <property type="match status" value="2"/>
</dbReference>
<dbReference type="HAMAP" id="MF_01114">
    <property type="entry name" value="RecX"/>
    <property type="match status" value="1"/>
</dbReference>
<dbReference type="InterPro" id="IPR053926">
    <property type="entry name" value="RecX_HTH_1st"/>
</dbReference>
<dbReference type="InterPro" id="IPR053924">
    <property type="entry name" value="RecX_HTH_2nd"/>
</dbReference>
<dbReference type="InterPro" id="IPR003783">
    <property type="entry name" value="Regulatory_RecX"/>
</dbReference>
<dbReference type="InterPro" id="IPR036388">
    <property type="entry name" value="WH-like_DNA-bd_sf"/>
</dbReference>
<dbReference type="PANTHER" id="PTHR33602">
    <property type="entry name" value="REGULATORY PROTEIN RECX FAMILY PROTEIN"/>
    <property type="match status" value="1"/>
</dbReference>
<dbReference type="PANTHER" id="PTHR33602:SF1">
    <property type="entry name" value="REGULATORY PROTEIN RECX FAMILY PROTEIN"/>
    <property type="match status" value="1"/>
</dbReference>
<dbReference type="Pfam" id="PF21982">
    <property type="entry name" value="RecX_HTH1"/>
    <property type="match status" value="1"/>
</dbReference>
<dbReference type="Pfam" id="PF02631">
    <property type="entry name" value="RecX_HTH2"/>
    <property type="match status" value="1"/>
</dbReference>